<dbReference type="EMBL" id="AY129338">
    <property type="protein sequence ID" value="AAN12848.1"/>
    <property type="molecule type" value="Genomic_DNA"/>
</dbReference>
<dbReference type="RefSeq" id="NP_818506.1">
    <property type="nucleotide sequence ID" value="NC_004688.1"/>
</dbReference>
<dbReference type="SMR" id="Q853W0"/>
<dbReference type="KEGG" id="vg:1260006"/>
<dbReference type="Proteomes" id="UP000000963">
    <property type="component" value="Genome"/>
</dbReference>
<dbReference type="GO" id="GO:0016746">
    <property type="term" value="F:acyltransferase activity"/>
    <property type="evidence" value="ECO:0007669"/>
    <property type="project" value="InterPro"/>
</dbReference>
<dbReference type="GO" id="GO:0003690">
    <property type="term" value="F:double-stranded DNA binding"/>
    <property type="evidence" value="ECO:0000314"/>
    <property type="project" value="UniProtKB"/>
</dbReference>
<dbReference type="GO" id="GO:0006303">
    <property type="term" value="P:double-strand break repair via nonhomologous end joining"/>
    <property type="evidence" value="ECO:0007669"/>
    <property type="project" value="InterPro"/>
</dbReference>
<dbReference type="GO" id="GO:0046718">
    <property type="term" value="P:symbiont entry into host cell"/>
    <property type="evidence" value="ECO:0007669"/>
    <property type="project" value="UniProtKB-KW"/>
</dbReference>
<dbReference type="GO" id="GO:0099016">
    <property type="term" value="P:symbiont-mediated evasion of DNA end degradation by host"/>
    <property type="evidence" value="ECO:0007669"/>
    <property type="project" value="UniProtKB-KW"/>
</dbReference>
<dbReference type="GO" id="GO:0052170">
    <property type="term" value="P:symbiont-mediated suppression of host innate immune response"/>
    <property type="evidence" value="ECO:0007669"/>
    <property type="project" value="UniProtKB-KW"/>
</dbReference>
<dbReference type="GO" id="GO:0099009">
    <property type="term" value="P:viral genome circularization"/>
    <property type="evidence" value="ECO:0007669"/>
    <property type="project" value="UniProtKB-KW"/>
</dbReference>
<dbReference type="FunFam" id="2.40.290.10:FF:000004">
    <property type="entry name" value="Non-homologous end joining protein Ku"/>
    <property type="match status" value="1"/>
</dbReference>
<dbReference type="Gene3D" id="2.40.290.10">
    <property type="match status" value="1"/>
</dbReference>
<dbReference type="Gene3D" id="4.10.320.10">
    <property type="entry name" value="E3-binding domain"/>
    <property type="match status" value="1"/>
</dbReference>
<dbReference type="HAMAP" id="MF_01875">
    <property type="entry name" value="Prokaryotic_Ku"/>
    <property type="match status" value="1"/>
</dbReference>
<dbReference type="InterPro" id="IPR036625">
    <property type="entry name" value="E3-bd_dom_sf"/>
</dbReference>
<dbReference type="InterPro" id="IPR006164">
    <property type="entry name" value="Ku70/Ku80_beta-barrel_dom"/>
</dbReference>
<dbReference type="InterPro" id="IPR055370">
    <property type="entry name" value="Lsr2_DNA-bd"/>
</dbReference>
<dbReference type="InterPro" id="IPR009187">
    <property type="entry name" value="Prok_Ku"/>
</dbReference>
<dbReference type="InterPro" id="IPR016194">
    <property type="entry name" value="SPOC-like_C_dom_sf"/>
</dbReference>
<dbReference type="NCBIfam" id="TIGR02772">
    <property type="entry name" value="Ku_bact"/>
    <property type="match status" value="1"/>
</dbReference>
<dbReference type="PANTHER" id="PTHR41251">
    <property type="entry name" value="NON-HOMOLOGOUS END JOINING PROTEIN KU"/>
    <property type="match status" value="1"/>
</dbReference>
<dbReference type="PANTHER" id="PTHR41251:SF1">
    <property type="entry name" value="NON-HOMOLOGOUS END JOINING PROTEIN KU"/>
    <property type="match status" value="1"/>
</dbReference>
<dbReference type="Pfam" id="PF02735">
    <property type="entry name" value="Ku"/>
    <property type="match status" value="1"/>
</dbReference>
<dbReference type="Pfam" id="PF23359">
    <property type="entry name" value="Lsr2_DNA-bd"/>
    <property type="match status" value="1"/>
</dbReference>
<dbReference type="PIRSF" id="PIRSF006493">
    <property type="entry name" value="Prok_Ku"/>
    <property type="match status" value="1"/>
</dbReference>
<dbReference type="SMART" id="SM00559">
    <property type="entry name" value="Ku78"/>
    <property type="match status" value="1"/>
</dbReference>
<dbReference type="SUPFAM" id="SSF100939">
    <property type="entry name" value="SPOC domain-like"/>
    <property type="match status" value="1"/>
</dbReference>
<proteinExistence type="evidence at protein level"/>
<protein>
    <recommendedName>
        <fullName>Protein Ku</fullName>
    </recommendedName>
    <alternativeName>
        <fullName>Gp206</fullName>
    </alternativeName>
    <alternativeName>
        <fullName>Omega-Ku</fullName>
    </alternativeName>
</protein>
<organism>
    <name type="scientific">Mycobacterium phage Omega</name>
    <name type="common">Mycobacteriophage Omega</name>
    <dbReference type="NCBI Taxonomy" id="2907835"/>
    <lineage>
        <taxon>Viruses</taxon>
        <taxon>Duplodnaviria</taxon>
        <taxon>Heunggongvirae</taxon>
        <taxon>Uroviricota</taxon>
        <taxon>Caudoviricetes</taxon>
        <taxon>Omegavirus</taxon>
        <taxon>Omegavirus omega</taxon>
    </lineage>
</organism>
<gene>
    <name type="primary">206</name>
</gene>
<sequence>MRAVWTGAVNFGLVNVPVKMYAATEEHDLKGHLAHVQDGGRIRYHKVCETCGEQVHTADLGKVFEVDGQTALLTDEDLAELPSENNKVIDVVEFVPAGEVDPILLDKPYYLNAEGSVRPYALLARTLSDADKVAIVRVTLRSKEHLAVLRVTGKNEVLTLQTLRWPDEVREPDFPKLDNKPELSEAELKVAAMLVDELSAPFNPDKHQDTYKVELRALVESKLEPVEVPEDVSGLLAKLEASVKPKQAKPDIRTWAKAQGFKISARGRIPKDIVDKYEGAMA</sequence>
<comment type="function">
    <text evidence="1">Required for replication of viruses with short cos ends (4 bases). Stimulates dsDNA end-joining by host LigD; in conjunction with M.smegmatis or M.tuberculosis LigD can reconstitute NHEJ in S.cerevisiae. Binds dsDNA with either blunt, 5'- or 3-overhangs, protecting it from host exonuclease degradation.</text>
</comment>
<comment type="subunit">
    <text evidence="1 2">Homodimer (Probable). Interacts with host LigD, maybe via the LigD Pol domain.</text>
</comment>
<organismHost>
    <name type="scientific">Mycolicibacterium smegmatis</name>
    <name type="common">Mycobacterium smegmatis</name>
    <dbReference type="NCBI Taxonomy" id="1772"/>
</organismHost>
<name>KU_BPMOM</name>
<keyword id="KW-1256">DNA end degradation evasion by virus</keyword>
<keyword id="KW-0238">DNA-binding</keyword>
<keyword id="KW-0945">Host-virus interaction</keyword>
<keyword id="KW-1090">Inhibition of host innate immune response by virus</keyword>
<keyword id="KW-1185">Reference proteome</keyword>
<keyword id="KW-1253">Viral genome circularization</keyword>
<keyword id="KW-0899">Viral immunoevasion</keyword>
<keyword id="KW-1160">Virus entry into host cell</keyword>
<feature type="chain" id="PRO_0000425948" description="Protein Ku">
    <location>
        <begin position="1"/>
        <end position="282"/>
    </location>
</feature>
<feature type="domain" description="Ku">
    <location>
        <begin position="9"/>
        <end position="189"/>
    </location>
</feature>
<accession>Q853W0</accession>
<evidence type="ECO:0000269" key="1">
    <source>
    </source>
</evidence>
<evidence type="ECO:0000305" key="2"/>
<reference key="1">
    <citation type="journal article" date="2003" name="Cell">
        <title>Origins of highly mosaic mycobacteriophage genomes.</title>
        <authorList>
            <person name="Pedulla M.L."/>
            <person name="Ford M.E."/>
            <person name="Houtz J.M."/>
            <person name="Karthikeyan T."/>
            <person name="Wadsworth C."/>
            <person name="Lewis J.A."/>
            <person name="Jacobs-Sera D."/>
            <person name="Falbo J."/>
            <person name="Gross J."/>
            <person name="Pannunzio N.R."/>
            <person name="Brucker W."/>
            <person name="Kumar V."/>
            <person name="Kandasamy J."/>
            <person name="Keenan L."/>
            <person name="Bardarov S."/>
            <person name="Kriakov J."/>
            <person name="Lawrence J.G."/>
            <person name="Jacobs W.R. Jr."/>
            <person name="Hendrix R.W."/>
            <person name="Hatfull G.F."/>
        </authorList>
    </citation>
    <scope>NUCLEOTIDE SEQUENCE [GENOMIC DNA]</scope>
</reference>
<reference key="2">
    <citation type="journal article" date="2006" name="Mol. Cell">
        <title>Mycobacteriophage exploit NHEJ to facilitate genome circularization.</title>
        <authorList>
            <person name="Pitcher R.S."/>
            <person name="Tonkin L.M."/>
            <person name="Daley J.M."/>
            <person name="Palmbos P.L."/>
            <person name="Green A.J."/>
            <person name="Velting T.L."/>
            <person name="Brzostek A."/>
            <person name="Korycka-Machala M."/>
            <person name="Cresawn S."/>
            <person name="Dziadek J."/>
            <person name="Hatfull G.F."/>
            <person name="Wilson T.E."/>
            <person name="Doherty A.J."/>
        </authorList>
    </citation>
    <scope>FUNCTION</scope>
    <scope>SUBUNIT</scope>
    <scope>PROBABLE INTERACTION WITH HOST LIGD</scope>
    <scope>DNA-BINDING</scope>
</reference>